<accession>P67129</accession>
<accession>Q46931</accession>
<reference key="1">
    <citation type="journal article" date="2001" name="Nature">
        <title>Genome sequence of enterohaemorrhagic Escherichia coli O157:H7.</title>
        <authorList>
            <person name="Perna N.T."/>
            <person name="Plunkett G. III"/>
            <person name="Burland V."/>
            <person name="Mau B."/>
            <person name="Glasner J.D."/>
            <person name="Rose D.J."/>
            <person name="Mayhew G.F."/>
            <person name="Evans P.S."/>
            <person name="Gregor J."/>
            <person name="Kirkpatrick H.A."/>
            <person name="Posfai G."/>
            <person name="Hackett J."/>
            <person name="Klink S."/>
            <person name="Boutin A."/>
            <person name="Shao Y."/>
            <person name="Miller L."/>
            <person name="Grotbeck E.J."/>
            <person name="Davis N.W."/>
            <person name="Lim A."/>
            <person name="Dimalanta E.T."/>
            <person name="Potamousis K."/>
            <person name="Apodaca J."/>
            <person name="Anantharaman T.S."/>
            <person name="Lin J."/>
            <person name="Yen G."/>
            <person name="Schwartz D.C."/>
            <person name="Welch R.A."/>
            <person name="Blattner F.R."/>
        </authorList>
    </citation>
    <scope>NUCLEOTIDE SEQUENCE [LARGE SCALE GENOMIC DNA]</scope>
    <source>
        <strain>O157:H7 / EDL933 / ATCC 700927 / EHEC</strain>
    </source>
</reference>
<reference key="2">
    <citation type="journal article" date="2001" name="DNA Res.">
        <title>Complete genome sequence of enterohemorrhagic Escherichia coli O157:H7 and genomic comparison with a laboratory strain K-12.</title>
        <authorList>
            <person name="Hayashi T."/>
            <person name="Makino K."/>
            <person name="Ohnishi M."/>
            <person name="Kurokawa K."/>
            <person name="Ishii K."/>
            <person name="Yokoyama K."/>
            <person name="Han C.-G."/>
            <person name="Ohtsubo E."/>
            <person name="Nakayama K."/>
            <person name="Murata T."/>
            <person name="Tanaka M."/>
            <person name="Tobe T."/>
            <person name="Iida T."/>
            <person name="Takami H."/>
            <person name="Honda T."/>
            <person name="Sasakawa C."/>
            <person name="Ogasawara N."/>
            <person name="Yasunaga T."/>
            <person name="Kuhara S."/>
            <person name="Shiba T."/>
            <person name="Hattori M."/>
            <person name="Shinagawa H."/>
        </authorList>
    </citation>
    <scope>NUCLEOTIDE SEQUENCE [LARGE SCALE GENOMIC DNA]</scope>
    <source>
        <strain>O157:H7 / Sakai / RIMD 0509952 / EHEC</strain>
    </source>
</reference>
<comment type="subcellular location">
    <subcellularLocation>
        <location evidence="1">Cell inner membrane</location>
        <topology evidence="1">Multi-pass membrane protein</topology>
    </subcellularLocation>
</comment>
<comment type="similarity">
    <text evidence="3">Belongs to the UPF0053 family.</text>
</comment>
<protein>
    <recommendedName>
        <fullName>UPF0053 inner membrane protein YgdQ</fullName>
    </recommendedName>
</protein>
<dbReference type="EMBL" id="AE005174">
    <property type="protein sequence ID" value="AAG57944.1"/>
    <property type="molecule type" value="Genomic_DNA"/>
</dbReference>
<dbReference type="EMBL" id="BA000007">
    <property type="protein sequence ID" value="BAB37112.1"/>
    <property type="molecule type" value="Genomic_DNA"/>
</dbReference>
<dbReference type="PIR" id="A98090">
    <property type="entry name" value="A98090"/>
</dbReference>
<dbReference type="RefSeq" id="NP_311716.1">
    <property type="nucleotide sequence ID" value="NC_002695.1"/>
</dbReference>
<dbReference type="RefSeq" id="WP_000895624.1">
    <property type="nucleotide sequence ID" value="NZ_VOAI01000003.1"/>
</dbReference>
<dbReference type="STRING" id="155864.Z4150"/>
<dbReference type="GeneID" id="916496"/>
<dbReference type="KEGG" id="ece:Z4150"/>
<dbReference type="KEGG" id="ecs:ECs_3689"/>
<dbReference type="PATRIC" id="fig|386585.9.peg.3856"/>
<dbReference type="eggNOG" id="COG0861">
    <property type="taxonomic scope" value="Bacteria"/>
</dbReference>
<dbReference type="HOGENOM" id="CLU_064910_0_0_6"/>
<dbReference type="OMA" id="IEIMFLD"/>
<dbReference type="Proteomes" id="UP000000558">
    <property type="component" value="Chromosome"/>
</dbReference>
<dbReference type="Proteomes" id="UP000002519">
    <property type="component" value="Chromosome"/>
</dbReference>
<dbReference type="GO" id="GO:0005886">
    <property type="term" value="C:plasma membrane"/>
    <property type="evidence" value="ECO:0007669"/>
    <property type="project" value="UniProtKB-SubCell"/>
</dbReference>
<dbReference type="InterPro" id="IPR005496">
    <property type="entry name" value="Integral_membrane_TerC"/>
</dbReference>
<dbReference type="PANTHER" id="PTHR30060:SF0">
    <property type="entry name" value="COILED-COIL PROTEIN (DUF2040)-RELATED"/>
    <property type="match status" value="1"/>
</dbReference>
<dbReference type="PANTHER" id="PTHR30060">
    <property type="entry name" value="INNER MEMBRANE PROTEIN"/>
    <property type="match status" value="1"/>
</dbReference>
<dbReference type="Pfam" id="PF03741">
    <property type="entry name" value="TerC"/>
    <property type="match status" value="1"/>
</dbReference>
<organism>
    <name type="scientific">Escherichia coli O157:H7</name>
    <dbReference type="NCBI Taxonomy" id="83334"/>
    <lineage>
        <taxon>Bacteria</taxon>
        <taxon>Pseudomonadati</taxon>
        <taxon>Pseudomonadota</taxon>
        <taxon>Gammaproteobacteria</taxon>
        <taxon>Enterobacterales</taxon>
        <taxon>Enterobacteriaceae</taxon>
        <taxon>Escherichia</taxon>
    </lineage>
</organism>
<gene>
    <name type="primary">ygdQ</name>
    <name type="ordered locus">Z4150</name>
    <name type="ordered locus">ECs3689</name>
</gene>
<sequence>MLFAWITDPNAWLALGTLTLLEIVLGIDNIIFLSLVVAKLPTAQRAHARRLGLAGAMVMRLALLASIAWVTRLTNPLFTIFSQEISARDLILLLGGLFLIWKASKEIHESIEGEEEGLKTRVSSFLGAIVQIMLLDIIFSLDSVITAVGLSDHLFIMMAAVVIAVGVMMFAARSIGDFVERHPSVKMLALSFLILVGFTLILESFDIHVPKGYIYFAMFFSIAVESLNLIRNKKNPL</sequence>
<keyword id="KW-0997">Cell inner membrane</keyword>
<keyword id="KW-1003">Cell membrane</keyword>
<keyword id="KW-0472">Membrane</keyword>
<keyword id="KW-1185">Reference proteome</keyword>
<keyword id="KW-0812">Transmembrane</keyword>
<keyword id="KW-1133">Transmembrane helix</keyword>
<feature type="chain" id="PRO_0000088368" description="UPF0053 inner membrane protein YgdQ">
    <location>
        <begin position="1"/>
        <end position="237"/>
    </location>
</feature>
<feature type="topological domain" description="Periplasmic" evidence="2">
    <location>
        <begin position="1"/>
        <end position="17"/>
    </location>
</feature>
<feature type="transmembrane region" description="Helical" evidence="2">
    <location>
        <begin position="18"/>
        <end position="38"/>
    </location>
</feature>
<feature type="topological domain" description="Cytoplasmic" evidence="2">
    <location>
        <begin position="39"/>
        <end position="50"/>
    </location>
</feature>
<feature type="transmembrane region" description="Helical" evidence="2">
    <location>
        <begin position="51"/>
        <end position="71"/>
    </location>
</feature>
<feature type="topological domain" description="Periplasmic" evidence="2">
    <location>
        <begin position="72"/>
        <end position="79"/>
    </location>
</feature>
<feature type="transmembrane region" description="Helical" evidence="2">
    <location>
        <begin position="80"/>
        <end position="100"/>
    </location>
</feature>
<feature type="topological domain" description="Cytoplasmic" evidence="2">
    <location>
        <begin position="101"/>
        <end position="124"/>
    </location>
</feature>
<feature type="transmembrane region" description="Helical" evidence="2">
    <location>
        <begin position="125"/>
        <end position="145"/>
    </location>
</feature>
<feature type="topological domain" description="Periplasmic" evidence="2">
    <location>
        <begin position="146"/>
        <end position="151"/>
    </location>
</feature>
<feature type="transmembrane region" description="Helical" evidence="2">
    <location>
        <begin position="152"/>
        <end position="172"/>
    </location>
</feature>
<feature type="topological domain" description="Cytoplasmic" evidence="2">
    <location>
        <begin position="173"/>
        <end position="186"/>
    </location>
</feature>
<feature type="transmembrane region" description="Helical" evidence="2">
    <location>
        <begin position="187"/>
        <end position="207"/>
    </location>
</feature>
<feature type="topological domain" description="Periplasmic" evidence="2">
    <location>
        <begin position="208"/>
        <end position="209"/>
    </location>
</feature>
<feature type="transmembrane region" description="Helical" evidence="2">
    <location>
        <begin position="210"/>
        <end position="230"/>
    </location>
</feature>
<feature type="topological domain" description="Cytoplasmic" evidence="2">
    <location>
        <begin position="231"/>
        <end position="237"/>
    </location>
</feature>
<evidence type="ECO:0000250" key="1"/>
<evidence type="ECO:0000255" key="2"/>
<evidence type="ECO:0000305" key="3"/>
<name>YGDQ_ECO57</name>
<proteinExistence type="inferred from homology"/>